<comment type="function">
    <text evidence="1">May aid fertilization by loosening the cell wall of the stigma and style, thereby facilitating penetration of the pollen tube. Acts selectively on grass cell walls, which are relatively poor in pectins and xyloglucans and rich in glucuronoarabinoxylans and (1-3),(1-4)-beta-D-glucans, when compared with cell walls of other angiosperms, including other monocots (By similarity).</text>
</comment>
<comment type="subcellular location">
    <subcellularLocation>
        <location evidence="1">Secreted</location>
        <location evidence="1">Cell wall</location>
    </subcellularLocation>
    <subcellularLocation>
        <location evidence="1">Membrane</location>
        <topology evidence="1">Peripheral membrane protein</topology>
    </subcellularLocation>
</comment>
<comment type="tissue specificity">
    <text evidence="5">Expressed in pollen.</text>
</comment>
<comment type="allergen">
    <text evidence="1">Causes an allergic reaction in human. Causes maize pollen allergy (By similarity).</text>
</comment>
<comment type="similarity">
    <text evidence="6">Belongs to the expansin family. Expansin B subfamily.</text>
</comment>
<comment type="online information" name="EXPANSIN homepage">
    <link uri="https://www.dept.psu.edu/biology/groups/expansins/index.htm"/>
</comment>
<gene>
    <name type="primary">EXPB10</name>
</gene>
<name>EXB10_MAIZE</name>
<reference key="1">
    <citation type="journal article" date="2003" name="Plant Physiol.">
        <title>Purification and characterization of four beta-expansins (Zea m 1 isoforms) from maize pollen.</title>
        <authorList>
            <person name="Li L.-C."/>
            <person name="Bedinger P.A."/>
            <person name="Volk C."/>
            <person name="Jones A.D."/>
            <person name="Cosgrove D.J."/>
        </authorList>
    </citation>
    <scope>NUCLEOTIDE SEQUENCE [MRNA]</scope>
    <scope>PROTEIN SEQUENCE OF 32-51</scope>
    <scope>TISSUE SPECIFICITY</scope>
</reference>
<reference key="2">
    <citation type="journal article" date="2004" name="Plant Physiol.">
        <title>Anchoring 9,371 maize expressed sequence tagged unigenes to the bacterial artificial chromosome contig map by two-dimensional overgo hybridization.</title>
        <authorList>
            <person name="Gardiner J."/>
            <person name="Schroeder S."/>
            <person name="Polacco M.L."/>
            <person name="Sanchez-Villeda H."/>
            <person name="Fang Z."/>
            <person name="Morgante M."/>
            <person name="Landewe T."/>
            <person name="Fengler K."/>
            <person name="Useche F."/>
            <person name="Hanafey M."/>
            <person name="Tingey S."/>
            <person name="Chou H."/>
            <person name="Wing R."/>
            <person name="Soderlund C."/>
            <person name="Coe E.H. Jr."/>
        </authorList>
    </citation>
    <scope>NUCLEOTIDE SEQUENCE [MRNA]</scope>
</reference>
<reference key="3">
    <citation type="journal article" date="2006" name="Proteomics">
        <title>Proteome analysis of maize pollen for allergy-relevant components.</title>
        <authorList>
            <person name="Petersen A."/>
            <person name="Dresselhaus T."/>
            <person name="Grobe K."/>
            <person name="Becker W.M."/>
        </authorList>
    </citation>
    <scope>NUCLEOTIDE SEQUENCE [MRNA] OF 19-270</scope>
    <source>
        <tissue>Pollen</tissue>
    </source>
</reference>
<reference key="4">
    <citation type="journal article" date="2004" name="Plant Mol. Biol.">
        <title>Nomenclature for members of the expansin superfamily of genes and proteins.</title>
        <authorList>
            <person name="Kende H."/>
            <person name="Bradford K.J."/>
            <person name="Brummell D.A."/>
            <person name="Cho H.-T."/>
            <person name="Cosgrove D.J."/>
            <person name="Fleming A.J."/>
            <person name="Gehring C."/>
            <person name="Lee Y."/>
            <person name="McQueen-Mason S.J."/>
            <person name="Rose J.K.C."/>
            <person name="Voesenek L.A.C."/>
        </authorList>
    </citation>
    <scope>NOMENCLATURE</scope>
</reference>
<accession>Q1ZYQ8</accession>
<organism>
    <name type="scientific">Zea mays</name>
    <name type="common">Maize</name>
    <dbReference type="NCBI Taxonomy" id="4577"/>
    <lineage>
        <taxon>Eukaryota</taxon>
        <taxon>Viridiplantae</taxon>
        <taxon>Streptophyta</taxon>
        <taxon>Embryophyta</taxon>
        <taxon>Tracheophyta</taxon>
        <taxon>Spermatophyta</taxon>
        <taxon>Magnoliopsida</taxon>
        <taxon>Liliopsida</taxon>
        <taxon>Poales</taxon>
        <taxon>Poaceae</taxon>
        <taxon>PACMAD clade</taxon>
        <taxon>Panicoideae</taxon>
        <taxon>Andropogonodae</taxon>
        <taxon>Andropogoneae</taxon>
        <taxon>Tripsacinae</taxon>
        <taxon>Zea</taxon>
    </lineage>
</organism>
<sequence length="270" mass="29342">MAVNVRTMWSSMRAQVAMVVALVFLVRGAWCGPPKVPPGKNITATYGKDWLDAKATWYGKPTGAGPDDNGGGCGYKDVNKPPFNSMGACGNIPIFKDGLGCGSCFEIKCDKPVECSGKPVVVHITDMNYEPIAAYHFDLAGTAFGAMAKKGEEEKLRKAGIIDMQFRRVKCKYDSKVTFHLEKGCGPNYLALLVKYVDGDGDIVAVDVKEKGSDTYEPLKHSWGAIWRKDSDKPLKGPLTVRLTTEGGTKSVYDDVIPANWKANTAYTAK</sequence>
<feature type="signal peptide" evidence="5">
    <location>
        <begin position="1"/>
        <end position="31"/>
    </location>
</feature>
<feature type="chain" id="PRO_0000252096" description="Expansin-B10">
    <location>
        <begin position="32"/>
        <end position="270"/>
    </location>
</feature>
<feature type="domain" description="Expansin-like EG45" evidence="4">
    <location>
        <begin position="70"/>
        <end position="176"/>
    </location>
</feature>
<feature type="domain" description="Expansin-like CBD" evidence="3">
    <location>
        <begin position="188"/>
        <end position="269"/>
    </location>
</feature>
<feature type="glycosylation site" description="N-linked (GlcNAc...) asparagine" evidence="2">
    <location>
        <position position="41"/>
    </location>
</feature>
<feature type="disulfide bond" evidence="4">
    <location>
        <begin position="73"/>
        <end position="101"/>
    </location>
</feature>
<feature type="disulfide bond" evidence="4">
    <location>
        <begin position="104"/>
        <end position="171"/>
    </location>
</feature>
<feature type="disulfide bond" evidence="4">
    <location>
        <begin position="109"/>
        <end position="115"/>
    </location>
</feature>
<feature type="sequence conflict" description="In Ref. 3; ABD79095." evidence="6" ref="3">
    <original>VV</original>
    <variation>AR</variation>
    <location>
        <begin position="19"/>
        <end position="20"/>
    </location>
</feature>
<feature type="sequence conflict" description="In Ref. 3; ABD79095." evidence="6" ref="3">
    <original>R</original>
    <variation>S</variation>
    <location>
        <position position="27"/>
    </location>
</feature>
<protein>
    <recommendedName>
        <fullName>Expansin-B10</fullName>
    </recommendedName>
    <alternativeName>
        <fullName>Beta-expansin-10</fullName>
    </alternativeName>
    <alternativeName>
        <fullName>Pollen allergen Zea m 1c</fullName>
    </alternativeName>
    <alternativeName>
        <fullName>ZmEXPB10</fullName>
    </alternativeName>
    <allergenName>Zea m 1</allergenName>
</protein>
<proteinExistence type="evidence at protein level"/>
<evidence type="ECO:0000250" key="1"/>
<evidence type="ECO:0000255" key="2"/>
<evidence type="ECO:0000255" key="3">
    <source>
        <dbReference type="PROSITE-ProRule" id="PRU00078"/>
    </source>
</evidence>
<evidence type="ECO:0000255" key="4">
    <source>
        <dbReference type="PROSITE-ProRule" id="PRU00079"/>
    </source>
</evidence>
<evidence type="ECO:0000269" key="5">
    <source>
    </source>
</evidence>
<evidence type="ECO:0000305" key="6"/>
<dbReference type="EMBL" id="AY104125">
    <property type="status" value="NOT_ANNOTATED_CDS"/>
    <property type="molecule type" value="mRNA"/>
</dbReference>
<dbReference type="EMBL" id="DQ421828">
    <property type="protein sequence ID" value="ABD79095.1"/>
    <property type="molecule type" value="mRNA"/>
</dbReference>
<dbReference type="RefSeq" id="XP_008646122.1">
    <property type="nucleotide sequence ID" value="XM_008647900.1"/>
</dbReference>
<dbReference type="SMR" id="Q1ZYQ8"/>
<dbReference type="FunCoup" id="Q1ZYQ8">
    <property type="interactions" value="33"/>
</dbReference>
<dbReference type="STRING" id="4577.Q1ZYQ8"/>
<dbReference type="Allergome" id="680">
    <property type="allergen name" value="Zea m 1"/>
</dbReference>
<dbReference type="GlyCosmos" id="Q1ZYQ8">
    <property type="glycosylation" value="1 site, No reported glycans"/>
</dbReference>
<dbReference type="PaxDb" id="4577-GRMZM2G127106_P03"/>
<dbReference type="EnsemblPlants" id="Zm00001eb251740_T001">
    <property type="protein sequence ID" value="Zm00001eb251740_P001"/>
    <property type="gene ID" value="Zm00001eb251740"/>
</dbReference>
<dbReference type="Gramene" id="Zm00001eb251740_T001">
    <property type="protein sequence ID" value="Zm00001eb251740_P001"/>
    <property type="gene ID" value="Zm00001eb251740"/>
</dbReference>
<dbReference type="KEGG" id="zma:103627602"/>
<dbReference type="eggNOG" id="ENOG502QRTE">
    <property type="taxonomic scope" value="Eukaryota"/>
</dbReference>
<dbReference type="HOGENOM" id="CLU_027462_1_0_1"/>
<dbReference type="InParanoid" id="Q1ZYQ8"/>
<dbReference type="OMA" id="FRRVTFH"/>
<dbReference type="OrthoDB" id="644057at2759"/>
<dbReference type="Proteomes" id="UP000007305">
    <property type="component" value="Chromosome 5"/>
</dbReference>
<dbReference type="ExpressionAtlas" id="Q1ZYQ8">
    <property type="expression patterns" value="baseline"/>
</dbReference>
<dbReference type="GO" id="GO:0005576">
    <property type="term" value="C:extracellular region"/>
    <property type="evidence" value="ECO:0007669"/>
    <property type="project" value="UniProtKB-KW"/>
</dbReference>
<dbReference type="GO" id="GO:0016020">
    <property type="term" value="C:membrane"/>
    <property type="evidence" value="ECO:0007669"/>
    <property type="project" value="UniProtKB-SubCell"/>
</dbReference>
<dbReference type="GO" id="GO:0009828">
    <property type="term" value="P:plant-type cell wall loosening"/>
    <property type="evidence" value="ECO:0000250"/>
    <property type="project" value="UniProtKB"/>
</dbReference>
<dbReference type="GO" id="GO:0019953">
    <property type="term" value="P:sexual reproduction"/>
    <property type="evidence" value="ECO:0007669"/>
    <property type="project" value="InterPro"/>
</dbReference>
<dbReference type="CDD" id="cd22275">
    <property type="entry name" value="DPBB_EXPB_N"/>
    <property type="match status" value="1"/>
</dbReference>
<dbReference type="Gene3D" id="2.60.40.760">
    <property type="entry name" value="Expansin, cellulose-binding-like domain"/>
    <property type="match status" value="1"/>
</dbReference>
<dbReference type="Gene3D" id="2.40.40.10">
    <property type="entry name" value="RlpA-like domain"/>
    <property type="match status" value="1"/>
</dbReference>
<dbReference type="InterPro" id="IPR007118">
    <property type="entry name" value="Expan_Lol_pI"/>
</dbReference>
<dbReference type="InterPro" id="IPR007112">
    <property type="entry name" value="Expansin/allergen_DPBB_dom"/>
</dbReference>
<dbReference type="InterPro" id="IPR007117">
    <property type="entry name" value="Expansin_CBD"/>
</dbReference>
<dbReference type="InterPro" id="IPR036749">
    <property type="entry name" value="Expansin_CBD_sf"/>
</dbReference>
<dbReference type="InterPro" id="IPR005795">
    <property type="entry name" value="LolPI"/>
</dbReference>
<dbReference type="InterPro" id="IPR009009">
    <property type="entry name" value="RlpA-like_DPBB"/>
</dbReference>
<dbReference type="InterPro" id="IPR036908">
    <property type="entry name" value="RlpA-like_sf"/>
</dbReference>
<dbReference type="PANTHER" id="PTHR31692:SF21">
    <property type="entry name" value="EXPANSIN-B1"/>
    <property type="match status" value="1"/>
</dbReference>
<dbReference type="PANTHER" id="PTHR31692">
    <property type="entry name" value="EXPANSIN-B3"/>
    <property type="match status" value="1"/>
</dbReference>
<dbReference type="Pfam" id="PF03330">
    <property type="entry name" value="DPBB_1"/>
    <property type="match status" value="1"/>
</dbReference>
<dbReference type="Pfam" id="PF01357">
    <property type="entry name" value="Expansin_C"/>
    <property type="match status" value="1"/>
</dbReference>
<dbReference type="PRINTS" id="PR01225">
    <property type="entry name" value="EXPANSNFAMLY"/>
</dbReference>
<dbReference type="PRINTS" id="PR00829">
    <property type="entry name" value="LOLP1ALLERGN"/>
</dbReference>
<dbReference type="SMART" id="SM00837">
    <property type="entry name" value="DPBB_1"/>
    <property type="match status" value="1"/>
</dbReference>
<dbReference type="SUPFAM" id="SSF50685">
    <property type="entry name" value="Barwin-like endoglucanases"/>
    <property type="match status" value="1"/>
</dbReference>
<dbReference type="SUPFAM" id="SSF49590">
    <property type="entry name" value="PHL pollen allergen"/>
    <property type="match status" value="1"/>
</dbReference>
<dbReference type="PROSITE" id="PS50843">
    <property type="entry name" value="EXPANSIN_CBD"/>
    <property type="match status" value="1"/>
</dbReference>
<dbReference type="PROSITE" id="PS50842">
    <property type="entry name" value="EXPANSIN_EG45"/>
    <property type="match status" value="1"/>
</dbReference>
<keyword id="KW-0020">Allergen</keyword>
<keyword id="KW-0134">Cell wall</keyword>
<keyword id="KW-0961">Cell wall biogenesis/degradation</keyword>
<keyword id="KW-0903">Direct protein sequencing</keyword>
<keyword id="KW-1015">Disulfide bond</keyword>
<keyword id="KW-0325">Glycoprotein</keyword>
<keyword id="KW-0472">Membrane</keyword>
<keyword id="KW-1185">Reference proteome</keyword>
<keyword id="KW-0964">Secreted</keyword>
<keyword id="KW-0732">Signal</keyword>